<evidence type="ECO:0000250" key="1"/>
<evidence type="ECO:0000255" key="2"/>
<comment type="function">
    <text evidence="1">Member of the two-component regulatory system LytR/LytS that probably regulates genes involved in cell wall metabolism.</text>
</comment>
<comment type="catalytic activity">
    <reaction>
        <text>ATP + protein L-histidine = ADP + protein N-phospho-L-histidine.</text>
        <dbReference type="EC" id="2.7.13.3"/>
    </reaction>
</comment>
<comment type="subcellular location">
    <subcellularLocation>
        <location evidence="1">Cell membrane</location>
        <topology evidence="1">Multi-pass membrane protein</topology>
    </subcellularLocation>
</comment>
<sequence>MLNLFILLLERVGLIILLAYILMNINHFKTMMSERDKWRSKFQLIIIFGIFSMISNFTGIEIENGHIVSSDIYYHLSKDASMANTRVLTIGVSGLIGGPWVAIIVGIISGLCRLYIGGADAYTYLISSIVIAIISGYFGHQTIKQNTYPSIKKGAIIGAITEIIQMGCILLFTNNLHHAITLVSFIALPMIIINSLGTAIFLTIILSTIKQEEQMRAVQTHDVLQLANETLPYFRSGLNEKSAQQAAEIILKLMQVSAVAITNKKDILTHIGAGSDHHVARKEIITDLSKEVIQSGKLKVAHTREGIGCHHPNCPLEGAIVVPLYIHNEVAGTLKFYFTDNNIISTSDQQLAKGLANIFSSQLELGQAEMQGQLLKDAEIKSLQAQVNPHFFFNAINTISALVRIDSEKARRLLIQLSQFFRSNLNGARNNTITLQKELQQVAAYLSLEQARYPNRFNIHYRIDDQCQDALIPPFIIQILVENSIKHAFKNRKKNNHIDVDVSMKQDCLSISVQDNGQGIPADQLDTIGYTTVTSTTGTGNALVNLNKRLTGLFGTTSALNIQSSQSGTTVSCLIPYKSSKEEHFNESVNR</sequence>
<organism>
    <name type="scientific">Staphylococcus epidermidis (strain ATCC 12228 / FDA PCI 1200)</name>
    <dbReference type="NCBI Taxonomy" id="176280"/>
    <lineage>
        <taxon>Bacteria</taxon>
        <taxon>Bacillati</taxon>
        <taxon>Bacillota</taxon>
        <taxon>Bacilli</taxon>
        <taxon>Bacillales</taxon>
        <taxon>Staphylococcaceae</taxon>
        <taxon>Staphylococcus</taxon>
    </lineage>
</organism>
<feature type="chain" id="PRO_0000074799" description="Sensor protein LytS">
    <location>
        <begin position="1"/>
        <end position="591"/>
    </location>
</feature>
<feature type="transmembrane region" description="Helical" evidence="2">
    <location>
        <begin position="4"/>
        <end position="26"/>
    </location>
</feature>
<feature type="transmembrane region" description="Helical" evidence="2">
    <location>
        <begin position="45"/>
        <end position="67"/>
    </location>
</feature>
<feature type="transmembrane region" description="Helical" evidence="2">
    <location>
        <begin position="87"/>
        <end position="109"/>
    </location>
</feature>
<feature type="transmembrane region" description="Helical" evidence="2">
    <location>
        <begin position="122"/>
        <end position="139"/>
    </location>
</feature>
<feature type="transmembrane region" description="Helical" evidence="2">
    <location>
        <begin position="154"/>
        <end position="176"/>
    </location>
</feature>
<feature type="transmembrane region" description="Helical" evidence="2">
    <location>
        <begin position="183"/>
        <end position="205"/>
    </location>
</feature>
<feature type="domain" description="Histidine kinase">
    <location>
        <begin position="363"/>
        <end position="579"/>
    </location>
</feature>
<feature type="modified residue" description="Phosphohistidine; by autocatalysis" evidence="1">
    <location>
        <position position="390"/>
    </location>
</feature>
<name>LYTS_STAES</name>
<reference key="1">
    <citation type="journal article" date="2003" name="Mol. Microbiol.">
        <title>Genome-based analysis of virulence genes in a non-biofilm-forming Staphylococcus epidermidis strain (ATCC 12228).</title>
        <authorList>
            <person name="Zhang Y.-Q."/>
            <person name="Ren S.-X."/>
            <person name="Li H.-L."/>
            <person name="Wang Y.-X."/>
            <person name="Fu G."/>
            <person name="Yang J."/>
            <person name="Qin Z.-Q."/>
            <person name="Miao Y.-G."/>
            <person name="Wang W.-Y."/>
            <person name="Chen R.-S."/>
            <person name="Shen Y."/>
            <person name="Chen Z."/>
            <person name="Yuan Z.-H."/>
            <person name="Zhao G.-P."/>
            <person name="Qu D."/>
            <person name="Danchin A."/>
            <person name="Wen Y.-M."/>
        </authorList>
    </citation>
    <scope>NUCLEOTIDE SEQUENCE [LARGE SCALE GENOMIC DNA]</scope>
    <source>
        <strain>ATCC 12228 / FDA PCI 1200</strain>
    </source>
</reference>
<keyword id="KW-0067">ATP-binding</keyword>
<keyword id="KW-1003">Cell membrane</keyword>
<keyword id="KW-0418">Kinase</keyword>
<keyword id="KW-0472">Membrane</keyword>
<keyword id="KW-0547">Nucleotide-binding</keyword>
<keyword id="KW-0597">Phosphoprotein</keyword>
<keyword id="KW-0808">Transferase</keyword>
<keyword id="KW-0812">Transmembrane</keyword>
<keyword id="KW-1133">Transmembrane helix</keyword>
<keyword id="KW-0902">Two-component regulatory system</keyword>
<protein>
    <recommendedName>
        <fullName>Sensor protein LytS</fullName>
        <ecNumber>2.7.13.3</ecNumber>
    </recommendedName>
    <alternativeName>
        <fullName>Autolysin sensor kinase</fullName>
    </alternativeName>
</protein>
<gene>
    <name type="primary">lytS</name>
    <name type="ordered locus">SE_2011</name>
</gene>
<proteinExistence type="inferred from homology"/>
<accession>Q8CR79</accession>
<dbReference type="EC" id="2.7.13.3"/>
<dbReference type="EMBL" id="AE015929">
    <property type="protein sequence ID" value="AAO05652.1"/>
    <property type="molecule type" value="Genomic_DNA"/>
</dbReference>
<dbReference type="RefSeq" id="NP_765566.1">
    <property type="nucleotide sequence ID" value="NC_004461.1"/>
</dbReference>
<dbReference type="RefSeq" id="WP_002484941.1">
    <property type="nucleotide sequence ID" value="NC_004461.1"/>
</dbReference>
<dbReference type="SMR" id="Q8CR79"/>
<dbReference type="KEGG" id="sep:SE_2011"/>
<dbReference type="PATRIC" id="fig|176280.10.peg.1964"/>
<dbReference type="eggNOG" id="COG3275">
    <property type="taxonomic scope" value="Bacteria"/>
</dbReference>
<dbReference type="HOGENOM" id="CLU_020473_3_3_9"/>
<dbReference type="OrthoDB" id="9776552at2"/>
<dbReference type="Proteomes" id="UP000001411">
    <property type="component" value="Chromosome"/>
</dbReference>
<dbReference type="GO" id="GO:0005886">
    <property type="term" value="C:plasma membrane"/>
    <property type="evidence" value="ECO:0007669"/>
    <property type="project" value="UniProtKB-SubCell"/>
</dbReference>
<dbReference type="GO" id="GO:0005524">
    <property type="term" value="F:ATP binding"/>
    <property type="evidence" value="ECO:0007669"/>
    <property type="project" value="UniProtKB-KW"/>
</dbReference>
<dbReference type="GO" id="GO:0000155">
    <property type="term" value="F:phosphorelay sensor kinase activity"/>
    <property type="evidence" value="ECO:0007669"/>
    <property type="project" value="InterPro"/>
</dbReference>
<dbReference type="GO" id="GO:0071555">
    <property type="term" value="P:cell wall organization"/>
    <property type="evidence" value="ECO:0007669"/>
    <property type="project" value="InterPro"/>
</dbReference>
<dbReference type="Gene3D" id="1.10.1760.20">
    <property type="match status" value="1"/>
</dbReference>
<dbReference type="Gene3D" id="3.30.450.40">
    <property type="match status" value="1"/>
</dbReference>
<dbReference type="Gene3D" id="3.30.565.10">
    <property type="entry name" value="Histidine kinase-like ATPase, C-terminal domain"/>
    <property type="match status" value="1"/>
</dbReference>
<dbReference type="InterPro" id="IPR050640">
    <property type="entry name" value="Bact_2-comp_sensor_kinase"/>
</dbReference>
<dbReference type="InterPro" id="IPR029016">
    <property type="entry name" value="GAF-like_dom_sf"/>
</dbReference>
<dbReference type="InterPro" id="IPR036890">
    <property type="entry name" value="HATPase_C_sf"/>
</dbReference>
<dbReference type="InterPro" id="IPR010559">
    <property type="entry name" value="Sig_transdc_His_kin_internal"/>
</dbReference>
<dbReference type="InterPro" id="IPR011620">
    <property type="entry name" value="Sig_transdc_His_kinase_LytS_TM"/>
</dbReference>
<dbReference type="PANTHER" id="PTHR34220">
    <property type="entry name" value="SENSOR HISTIDINE KINASE YPDA"/>
    <property type="match status" value="1"/>
</dbReference>
<dbReference type="PANTHER" id="PTHR34220:SF7">
    <property type="entry name" value="SENSOR HISTIDINE KINASE YPDA"/>
    <property type="match status" value="1"/>
</dbReference>
<dbReference type="Pfam" id="PF07694">
    <property type="entry name" value="5TM-5TMR_LYT"/>
    <property type="match status" value="1"/>
</dbReference>
<dbReference type="Pfam" id="PF02518">
    <property type="entry name" value="HATPase_c"/>
    <property type="match status" value="1"/>
</dbReference>
<dbReference type="Pfam" id="PF06580">
    <property type="entry name" value="His_kinase"/>
    <property type="match status" value="1"/>
</dbReference>
<dbReference type="SMART" id="SM00387">
    <property type="entry name" value="HATPase_c"/>
    <property type="match status" value="1"/>
</dbReference>
<dbReference type="SUPFAM" id="SSF55874">
    <property type="entry name" value="ATPase domain of HSP90 chaperone/DNA topoisomerase II/histidine kinase"/>
    <property type="match status" value="1"/>
</dbReference>
<dbReference type="SUPFAM" id="SSF55781">
    <property type="entry name" value="GAF domain-like"/>
    <property type="match status" value="1"/>
</dbReference>